<gene>
    <name evidence="1" type="primary">thyA</name>
    <name type="ordered locus">AAur_2992</name>
</gene>
<proteinExistence type="inferred from homology"/>
<comment type="function">
    <text evidence="1">Catalyzes the reductive methylation of 2'-deoxyuridine-5'-monophosphate (dUMP) to 2'-deoxythymidine-5'-monophosphate (dTMP) while utilizing 5,10-methylenetetrahydrofolate (mTHF) as the methyl donor and reductant in the reaction, yielding dihydrofolate (DHF) as a by-product. This enzymatic reaction provides an intracellular de novo source of dTMP, an essential precursor for DNA biosynthesis.</text>
</comment>
<comment type="catalytic activity">
    <reaction evidence="1">
        <text>dUMP + (6R)-5,10-methylene-5,6,7,8-tetrahydrofolate = 7,8-dihydrofolate + dTMP</text>
        <dbReference type="Rhea" id="RHEA:12104"/>
        <dbReference type="ChEBI" id="CHEBI:15636"/>
        <dbReference type="ChEBI" id="CHEBI:57451"/>
        <dbReference type="ChEBI" id="CHEBI:63528"/>
        <dbReference type="ChEBI" id="CHEBI:246422"/>
        <dbReference type="EC" id="2.1.1.45"/>
    </reaction>
</comment>
<comment type="pathway">
    <text evidence="1">Pyrimidine metabolism; dTTP biosynthesis.</text>
</comment>
<comment type="subunit">
    <text evidence="1">Homodimer.</text>
</comment>
<comment type="subcellular location">
    <subcellularLocation>
        <location evidence="1">Cytoplasm</location>
    </subcellularLocation>
</comment>
<comment type="similarity">
    <text evidence="1">Belongs to the thymidylate synthase family. Bacterial-type ThyA subfamily.</text>
</comment>
<accession>A1R8Y7</accession>
<feature type="chain" id="PRO_0000321465" description="Thymidylate synthase">
    <location>
        <begin position="1"/>
        <end position="267"/>
    </location>
</feature>
<feature type="active site" description="Nucleophile" evidence="1">
    <location>
        <position position="149"/>
    </location>
</feature>
<feature type="binding site" description="in other chain" evidence="1">
    <location>
        <position position="24"/>
    </location>
    <ligand>
        <name>dUMP</name>
        <dbReference type="ChEBI" id="CHEBI:246422"/>
        <note>ligand shared between dimeric partners</note>
    </ligand>
</feature>
<feature type="binding site" evidence="1">
    <location>
        <position position="54"/>
    </location>
    <ligand>
        <name>(6R)-5,10-methylene-5,6,7,8-tetrahydrofolate</name>
        <dbReference type="ChEBI" id="CHEBI:15636"/>
    </ligand>
</feature>
<feature type="binding site" evidence="1">
    <location>
        <begin position="129"/>
        <end position="130"/>
    </location>
    <ligand>
        <name>dUMP</name>
        <dbReference type="ChEBI" id="CHEBI:246422"/>
        <note>ligand shared between dimeric partners</note>
    </ligand>
</feature>
<feature type="binding site" description="in other chain" evidence="1">
    <location>
        <begin position="169"/>
        <end position="172"/>
    </location>
    <ligand>
        <name>dUMP</name>
        <dbReference type="ChEBI" id="CHEBI:246422"/>
        <note>ligand shared between dimeric partners</note>
    </ligand>
</feature>
<feature type="binding site" evidence="1">
    <location>
        <position position="172"/>
    </location>
    <ligand>
        <name>(6R)-5,10-methylene-5,6,7,8-tetrahydrofolate</name>
        <dbReference type="ChEBI" id="CHEBI:15636"/>
    </ligand>
</feature>
<feature type="binding site" description="in other chain" evidence="1">
    <location>
        <position position="180"/>
    </location>
    <ligand>
        <name>dUMP</name>
        <dbReference type="ChEBI" id="CHEBI:246422"/>
        <note>ligand shared between dimeric partners</note>
    </ligand>
</feature>
<feature type="binding site" description="in other chain" evidence="1">
    <location>
        <begin position="210"/>
        <end position="212"/>
    </location>
    <ligand>
        <name>dUMP</name>
        <dbReference type="ChEBI" id="CHEBI:246422"/>
        <note>ligand shared between dimeric partners</note>
    </ligand>
</feature>
<feature type="binding site" evidence="1">
    <location>
        <position position="266"/>
    </location>
    <ligand>
        <name>(6R)-5,10-methylene-5,6,7,8-tetrahydrofolate</name>
        <dbReference type="ChEBI" id="CHEBI:15636"/>
    </ligand>
</feature>
<sequence>MSIPTPYEDLLRDVMANGTHKSDRTGTGTRSVFGRQLRFDLAESFPLITTKRVHFKSVAVELLWFLRGDSNVKWMQDQGVSIWDEWADADGELGPVYGVQWRSWPTPDGGHIDQISELMTNLAANPDSRRHIVSAWNVSELKDMALPPCHAFFQFYVADGKLSCQLYQRSADTFLGVPFNIASYALLTRMVAQQLGLEPGEFVWTGGDVHVYDNHVDQVAEQLSREPYEYPQLKILRKPDSIFDYTLDDFEVVDYRHHPTIKAPIAV</sequence>
<organism>
    <name type="scientific">Paenarthrobacter aurescens (strain TC1)</name>
    <dbReference type="NCBI Taxonomy" id="290340"/>
    <lineage>
        <taxon>Bacteria</taxon>
        <taxon>Bacillati</taxon>
        <taxon>Actinomycetota</taxon>
        <taxon>Actinomycetes</taxon>
        <taxon>Micrococcales</taxon>
        <taxon>Micrococcaceae</taxon>
        <taxon>Paenarthrobacter</taxon>
    </lineage>
</organism>
<name>TYSY_PAEAT</name>
<protein>
    <recommendedName>
        <fullName evidence="1">Thymidylate synthase</fullName>
        <shortName evidence="1">TS</shortName>
        <shortName evidence="1">TSase</shortName>
        <ecNumber evidence="1">2.1.1.45</ecNumber>
    </recommendedName>
</protein>
<reference key="1">
    <citation type="journal article" date="2006" name="PLoS Genet.">
        <title>Secrets of soil survival revealed by the genome sequence of Arthrobacter aurescens TC1.</title>
        <authorList>
            <person name="Mongodin E.F."/>
            <person name="Shapir N."/>
            <person name="Daugherty S.C."/>
            <person name="DeBoy R.T."/>
            <person name="Emerson J.B."/>
            <person name="Shvartzbeyn A."/>
            <person name="Radune D."/>
            <person name="Vamathevan J."/>
            <person name="Riggs F."/>
            <person name="Grinberg V."/>
            <person name="Khouri H.M."/>
            <person name="Wackett L.P."/>
            <person name="Nelson K.E."/>
            <person name="Sadowsky M.J."/>
        </authorList>
    </citation>
    <scope>NUCLEOTIDE SEQUENCE [LARGE SCALE GENOMIC DNA]</scope>
    <source>
        <strain>TC1</strain>
    </source>
</reference>
<dbReference type="EC" id="2.1.1.45" evidence="1"/>
<dbReference type="EMBL" id="CP000474">
    <property type="protein sequence ID" value="ABM06854.1"/>
    <property type="molecule type" value="Genomic_DNA"/>
</dbReference>
<dbReference type="RefSeq" id="WP_011775634.1">
    <property type="nucleotide sequence ID" value="NC_008711.1"/>
</dbReference>
<dbReference type="SMR" id="A1R8Y7"/>
<dbReference type="STRING" id="290340.AAur_2992"/>
<dbReference type="KEGG" id="aau:AAur_2992"/>
<dbReference type="eggNOG" id="COG0207">
    <property type="taxonomic scope" value="Bacteria"/>
</dbReference>
<dbReference type="HOGENOM" id="CLU_021669_0_0_11"/>
<dbReference type="OrthoDB" id="9774633at2"/>
<dbReference type="UniPathway" id="UPA00575"/>
<dbReference type="Proteomes" id="UP000000637">
    <property type="component" value="Chromosome"/>
</dbReference>
<dbReference type="GO" id="GO:0005829">
    <property type="term" value="C:cytosol"/>
    <property type="evidence" value="ECO:0007669"/>
    <property type="project" value="TreeGrafter"/>
</dbReference>
<dbReference type="GO" id="GO:0004799">
    <property type="term" value="F:thymidylate synthase activity"/>
    <property type="evidence" value="ECO:0007669"/>
    <property type="project" value="UniProtKB-UniRule"/>
</dbReference>
<dbReference type="GO" id="GO:0006231">
    <property type="term" value="P:dTMP biosynthetic process"/>
    <property type="evidence" value="ECO:0007669"/>
    <property type="project" value="UniProtKB-UniRule"/>
</dbReference>
<dbReference type="GO" id="GO:0006235">
    <property type="term" value="P:dTTP biosynthetic process"/>
    <property type="evidence" value="ECO:0007669"/>
    <property type="project" value="UniProtKB-UniRule"/>
</dbReference>
<dbReference type="GO" id="GO:0032259">
    <property type="term" value="P:methylation"/>
    <property type="evidence" value="ECO:0007669"/>
    <property type="project" value="UniProtKB-KW"/>
</dbReference>
<dbReference type="CDD" id="cd00351">
    <property type="entry name" value="TS_Pyrimidine_HMase"/>
    <property type="match status" value="1"/>
</dbReference>
<dbReference type="FunFam" id="3.30.572.10:FF:000013">
    <property type="entry name" value="Thymidylate synthase"/>
    <property type="match status" value="1"/>
</dbReference>
<dbReference type="Gene3D" id="3.30.572.10">
    <property type="entry name" value="Thymidylate synthase/dCMP hydroxymethylase domain"/>
    <property type="match status" value="1"/>
</dbReference>
<dbReference type="HAMAP" id="MF_00008">
    <property type="entry name" value="Thymidy_synth_bact"/>
    <property type="match status" value="1"/>
</dbReference>
<dbReference type="InterPro" id="IPR045097">
    <property type="entry name" value="Thymidate_synth/dCMP_Mease"/>
</dbReference>
<dbReference type="InterPro" id="IPR023451">
    <property type="entry name" value="Thymidate_synth/dCMP_Mease_dom"/>
</dbReference>
<dbReference type="InterPro" id="IPR036926">
    <property type="entry name" value="Thymidate_synth/dCMP_Mease_sf"/>
</dbReference>
<dbReference type="InterPro" id="IPR000398">
    <property type="entry name" value="Thymidylate_synthase"/>
</dbReference>
<dbReference type="InterPro" id="IPR020940">
    <property type="entry name" value="Thymidylate_synthase_AS"/>
</dbReference>
<dbReference type="NCBIfam" id="NF002497">
    <property type="entry name" value="PRK01827.1-3"/>
    <property type="match status" value="1"/>
</dbReference>
<dbReference type="NCBIfam" id="NF002499">
    <property type="entry name" value="PRK01827.1-5"/>
    <property type="match status" value="1"/>
</dbReference>
<dbReference type="NCBIfam" id="TIGR03284">
    <property type="entry name" value="thym_sym"/>
    <property type="match status" value="2"/>
</dbReference>
<dbReference type="PANTHER" id="PTHR11548">
    <property type="entry name" value="THYMIDYLATE SYNTHASE 1"/>
    <property type="match status" value="1"/>
</dbReference>
<dbReference type="PANTHER" id="PTHR11548:SF1">
    <property type="entry name" value="THYMIDYLATE SYNTHASE 1"/>
    <property type="match status" value="1"/>
</dbReference>
<dbReference type="Pfam" id="PF00303">
    <property type="entry name" value="Thymidylat_synt"/>
    <property type="match status" value="1"/>
</dbReference>
<dbReference type="PRINTS" id="PR00108">
    <property type="entry name" value="THYMDSNTHASE"/>
</dbReference>
<dbReference type="SUPFAM" id="SSF55831">
    <property type="entry name" value="Thymidylate synthase/dCMP hydroxymethylase"/>
    <property type="match status" value="1"/>
</dbReference>
<dbReference type="PROSITE" id="PS00091">
    <property type="entry name" value="THYMIDYLATE_SYNTHASE"/>
    <property type="match status" value="1"/>
</dbReference>
<keyword id="KW-0963">Cytoplasm</keyword>
<keyword id="KW-0489">Methyltransferase</keyword>
<keyword id="KW-0545">Nucleotide biosynthesis</keyword>
<keyword id="KW-0808">Transferase</keyword>
<evidence type="ECO:0000255" key="1">
    <source>
        <dbReference type="HAMAP-Rule" id="MF_00008"/>
    </source>
</evidence>